<keyword id="KW-0131">Cell cycle</keyword>
<keyword id="KW-0132">Cell division</keyword>
<keyword id="KW-0997">Cell inner membrane</keyword>
<keyword id="KW-1003">Cell membrane</keyword>
<keyword id="KW-0175">Coiled coil</keyword>
<keyword id="KW-0472">Membrane</keyword>
<keyword id="KW-1185">Reference proteome</keyword>
<keyword id="KW-0812">Transmembrane</keyword>
<keyword id="KW-1133">Transmembrane helix</keyword>
<dbReference type="EMBL" id="AE014299">
    <property type="protein sequence ID" value="AAN56436.1"/>
    <property type="molecule type" value="Genomic_DNA"/>
</dbReference>
<dbReference type="RefSeq" id="NP_718992.1">
    <property type="nucleotide sequence ID" value="NC_004347.2"/>
</dbReference>
<dbReference type="RefSeq" id="WP_011073295.1">
    <property type="nucleotide sequence ID" value="NC_004347.2"/>
</dbReference>
<dbReference type="SMR" id="Q8EBR1"/>
<dbReference type="STRING" id="211586.SO_3439"/>
<dbReference type="PaxDb" id="211586-SO_3439"/>
<dbReference type="KEGG" id="son:SO_3439"/>
<dbReference type="PATRIC" id="fig|211586.12.peg.3334"/>
<dbReference type="eggNOG" id="COG2919">
    <property type="taxonomic scope" value="Bacteria"/>
</dbReference>
<dbReference type="HOGENOM" id="CLU_134863_5_2_6"/>
<dbReference type="OrthoDB" id="7061211at2"/>
<dbReference type="PhylomeDB" id="Q8EBR1"/>
<dbReference type="BioCyc" id="SONE211586:G1GMP-3210-MONOMER"/>
<dbReference type="Proteomes" id="UP000008186">
    <property type="component" value="Chromosome"/>
</dbReference>
<dbReference type="GO" id="GO:0032153">
    <property type="term" value="C:cell division site"/>
    <property type="evidence" value="ECO:0007669"/>
    <property type="project" value="UniProtKB-UniRule"/>
</dbReference>
<dbReference type="GO" id="GO:0030428">
    <property type="term" value="C:cell septum"/>
    <property type="evidence" value="ECO:0000318"/>
    <property type="project" value="GO_Central"/>
</dbReference>
<dbReference type="GO" id="GO:0005886">
    <property type="term" value="C:plasma membrane"/>
    <property type="evidence" value="ECO:0007669"/>
    <property type="project" value="UniProtKB-SubCell"/>
</dbReference>
<dbReference type="GO" id="GO:0043093">
    <property type="term" value="P:FtsZ-dependent cytokinesis"/>
    <property type="evidence" value="ECO:0000318"/>
    <property type="project" value="GO_Central"/>
</dbReference>
<dbReference type="HAMAP" id="MF_00599">
    <property type="entry name" value="FtsB"/>
    <property type="match status" value="1"/>
</dbReference>
<dbReference type="InterPro" id="IPR023081">
    <property type="entry name" value="Cell_div_FtsB"/>
</dbReference>
<dbReference type="InterPro" id="IPR007060">
    <property type="entry name" value="FtsL/DivIC"/>
</dbReference>
<dbReference type="NCBIfam" id="NF002058">
    <property type="entry name" value="PRK00888.1"/>
    <property type="match status" value="1"/>
</dbReference>
<dbReference type="PANTHER" id="PTHR37485">
    <property type="entry name" value="CELL DIVISION PROTEIN FTSB"/>
    <property type="match status" value="1"/>
</dbReference>
<dbReference type="PANTHER" id="PTHR37485:SF1">
    <property type="entry name" value="CELL DIVISION PROTEIN FTSB"/>
    <property type="match status" value="1"/>
</dbReference>
<dbReference type="Pfam" id="PF04977">
    <property type="entry name" value="DivIC"/>
    <property type="match status" value="1"/>
</dbReference>
<protein>
    <recommendedName>
        <fullName evidence="1">Cell division protein FtsB</fullName>
    </recommendedName>
</protein>
<gene>
    <name evidence="1" type="primary">ftsB</name>
    <name type="ordered locus">SO_3439</name>
</gene>
<feature type="chain" id="PRO_0000214456" description="Cell division protein FtsB">
    <location>
        <begin position="1"/>
        <end position="99"/>
    </location>
</feature>
<feature type="topological domain" description="Cytoplasmic" evidence="1">
    <location>
        <begin position="1"/>
        <end position="3"/>
    </location>
</feature>
<feature type="transmembrane region" description="Helical" evidence="1">
    <location>
        <begin position="4"/>
        <end position="21"/>
    </location>
</feature>
<feature type="topological domain" description="Periplasmic" evidence="1">
    <location>
        <begin position="22"/>
        <end position="99"/>
    </location>
</feature>
<feature type="coiled-coil region" evidence="1">
    <location>
        <begin position="31"/>
        <end position="73"/>
    </location>
</feature>
<accession>Q8EBR1</accession>
<name>FTSB_SHEON</name>
<comment type="function">
    <text evidence="1">Essential cell division protein. May link together the upstream cell division proteins, which are predominantly cytoplasmic, with the downstream cell division proteins, which are predominantly periplasmic.</text>
</comment>
<comment type="subunit">
    <text evidence="1">Part of a complex composed of FtsB, FtsL and FtsQ.</text>
</comment>
<comment type="subcellular location">
    <subcellularLocation>
        <location evidence="1">Cell inner membrane</location>
        <topology evidence="1">Single-pass type II membrane protein</topology>
    </subcellularLocation>
    <text evidence="1">Localizes to the division septum.</text>
</comment>
<comment type="similarity">
    <text evidence="1">Belongs to the FtsB family.</text>
</comment>
<proteinExistence type="inferred from homology"/>
<reference key="1">
    <citation type="journal article" date="2002" name="Nat. Biotechnol.">
        <title>Genome sequence of the dissimilatory metal ion-reducing bacterium Shewanella oneidensis.</title>
        <authorList>
            <person name="Heidelberg J.F."/>
            <person name="Paulsen I.T."/>
            <person name="Nelson K.E."/>
            <person name="Gaidos E.J."/>
            <person name="Nelson W.C."/>
            <person name="Read T.D."/>
            <person name="Eisen J.A."/>
            <person name="Seshadri R."/>
            <person name="Ward N.L."/>
            <person name="Methe B.A."/>
            <person name="Clayton R.A."/>
            <person name="Meyer T."/>
            <person name="Tsapin A."/>
            <person name="Scott J."/>
            <person name="Beanan M.J."/>
            <person name="Brinkac L.M."/>
            <person name="Daugherty S.C."/>
            <person name="DeBoy R.T."/>
            <person name="Dodson R.J."/>
            <person name="Durkin A.S."/>
            <person name="Haft D.H."/>
            <person name="Kolonay J.F."/>
            <person name="Madupu R."/>
            <person name="Peterson J.D."/>
            <person name="Umayam L.A."/>
            <person name="White O."/>
            <person name="Wolf A.M."/>
            <person name="Vamathevan J.J."/>
            <person name="Weidman J.F."/>
            <person name="Impraim M."/>
            <person name="Lee K."/>
            <person name="Berry K.J."/>
            <person name="Lee C."/>
            <person name="Mueller J."/>
            <person name="Khouri H.M."/>
            <person name="Gill J."/>
            <person name="Utterback T.R."/>
            <person name="McDonald L.A."/>
            <person name="Feldblyum T.V."/>
            <person name="Smith H.O."/>
            <person name="Venter J.C."/>
            <person name="Nealson K.H."/>
            <person name="Fraser C.M."/>
        </authorList>
    </citation>
    <scope>NUCLEOTIDE SEQUENCE [LARGE SCALE GENOMIC DNA]</scope>
    <source>
        <strain>ATCC 700550 / JCM 31522 / CIP 106686 / LMG 19005 / NCIMB 14063 / MR-1</strain>
    </source>
</reference>
<organism>
    <name type="scientific">Shewanella oneidensis (strain ATCC 700550 / JCM 31522 / CIP 106686 / LMG 19005 / NCIMB 14063 / MR-1)</name>
    <dbReference type="NCBI Taxonomy" id="211586"/>
    <lineage>
        <taxon>Bacteria</taxon>
        <taxon>Pseudomonadati</taxon>
        <taxon>Pseudomonadota</taxon>
        <taxon>Gammaproteobacteria</taxon>
        <taxon>Alteromonadales</taxon>
        <taxon>Shewanellaceae</taxon>
        <taxon>Shewanella</taxon>
    </lineage>
</organism>
<evidence type="ECO:0000255" key="1">
    <source>
        <dbReference type="HAMAP-Rule" id="MF_00599"/>
    </source>
</evidence>
<sequence>MKFFVITLIVLLGLLQYRLWSGDNSLPEYFVLQKQIAAQQDGNAKLNERNQVLKEEIIDLKSGTEAIEERARNELGMVKEGETFYRVVGGDRAVSSPSQ</sequence>